<feature type="chain" id="PRO_0000248854" description="Forkhead box protein A1-A">
    <location>
        <begin position="1"/>
        <end position="429"/>
    </location>
</feature>
<feature type="DNA-binding region" description="Fork-head" evidence="2">
    <location>
        <begin position="159"/>
        <end position="253"/>
    </location>
</feature>
<feature type="region of interest" description="Disordered" evidence="3">
    <location>
        <begin position="258"/>
        <end position="341"/>
    </location>
</feature>
<feature type="compositionally biased region" description="Basic and acidic residues" evidence="3">
    <location>
        <begin position="258"/>
        <end position="274"/>
    </location>
</feature>
<feature type="compositionally biased region" description="Low complexity" evidence="3">
    <location>
        <begin position="287"/>
        <end position="304"/>
    </location>
</feature>
<feature type="compositionally biased region" description="Polar residues" evidence="3">
    <location>
        <begin position="325"/>
        <end position="336"/>
    </location>
</feature>
<reference evidence="7" key="1">
    <citation type="journal article" date="1996" name="Int. J. Dev. Biol.">
        <title>A fork head related multigene family is transcribed in Xenopus laevis embryos.</title>
        <authorList>
            <person name="Lef J."/>
            <person name="Dege P."/>
            <person name="Scheucher M."/>
            <person name="Forsbach-Birk V."/>
            <person name="Clement J.H."/>
            <person name="Knoechel W."/>
        </authorList>
    </citation>
    <scope>NUCLEOTIDE SEQUENCE [MRNA]</scope>
    <scope>TISSUE SPECIFICITY</scope>
    <scope>DEVELOPMENTAL STAGE</scope>
    <source>
        <tissue evidence="6">Gastrula</tissue>
    </source>
</reference>
<reference evidence="7 8" key="2">
    <citation type="journal article" date="1994" name="Nucleic Acids Res.">
        <title>Novel HOX, POU and FKH genes expressed during bFGF-induced mesodermal differentiation in Xenopus.</title>
        <authorList>
            <person name="King M.W."/>
            <person name="Moore M.J."/>
        </authorList>
    </citation>
    <scope>NUCLEOTIDE SEQUENCE [MRNA] OF 174-204</scope>
    <source>
        <tissue evidence="5">Embryo</tissue>
    </source>
</reference>
<reference evidence="7" key="3">
    <citation type="journal article" date="2005" name="Gene">
        <title>Of fox and frogs: fox (fork head/winged helix) transcription factors in Xenopus development.</title>
        <authorList>
            <person name="Pohl B.S."/>
            <person name="Knoechel W."/>
        </authorList>
    </citation>
    <scope>REVIEW</scope>
</reference>
<comment type="function">
    <text evidence="4">Probable transcription factor.</text>
</comment>
<comment type="subcellular location">
    <subcellularLocation>
        <location evidence="1 7">Nucleus</location>
    </subcellularLocation>
</comment>
<comment type="tissue specificity">
    <text evidence="6">At neurula stage, expressed in the notochord but not in the neural floor plate. During tailbud stages, expressed in the neural floor plate. At stage 35, expressed in the rhombencephalon, mesencephalon, pharyngeal pouches, foregut and pronephros. At stage 44, expressed in a region of the gut on the right hand side of the embryo. Expressed in the adult lung and liver.</text>
</comment>
<comment type="developmental stage">
    <text evidence="6">Expressed zygotically. Expression begins in the blastula stage. Levels increase throughout gastrulation before decreasing at the tadpole stage.</text>
</comment>
<organism>
    <name type="scientific">Xenopus laevis</name>
    <name type="common">African clawed frog</name>
    <dbReference type="NCBI Taxonomy" id="8355"/>
    <lineage>
        <taxon>Eukaryota</taxon>
        <taxon>Metazoa</taxon>
        <taxon>Chordata</taxon>
        <taxon>Craniata</taxon>
        <taxon>Vertebrata</taxon>
        <taxon>Euteleostomi</taxon>
        <taxon>Amphibia</taxon>
        <taxon>Batrachia</taxon>
        <taxon>Anura</taxon>
        <taxon>Pipoidea</taxon>
        <taxon>Pipidae</taxon>
        <taxon>Xenopodinae</taxon>
        <taxon>Xenopus</taxon>
        <taxon>Xenopus</taxon>
    </lineage>
</organism>
<protein>
    <recommendedName>
        <fullName>Forkhead box protein A1-A</fullName>
        <shortName>FoxA1a</shortName>
    </recommendedName>
    <alternativeName>
        <fullName>Fork head domain-related protein 7</fullName>
        <shortName>xFD-7</shortName>
    </alternativeName>
    <alternativeName>
        <fullName>Hepatocyte nuclear factor 3-alpha homolog A</fullName>
        <shortName>HNF3alpha homolog A</shortName>
        <shortName>xHNF3alpha-A</shortName>
    </alternativeName>
</protein>
<dbReference type="EMBL" id="U04873">
    <property type="protein sequence ID" value="AAA85028.1"/>
    <property type="molecule type" value="mRNA"/>
</dbReference>
<dbReference type="RefSeq" id="XP_018083988.1">
    <property type="nucleotide sequence ID" value="XM_018228499.1"/>
</dbReference>
<dbReference type="SMR" id="Q6LD29"/>
<dbReference type="DNASU" id="100125667"/>
<dbReference type="AGR" id="Xenbase:XB-GENE-487356"/>
<dbReference type="Xenbase" id="XB-GENE-487356">
    <property type="gene designation" value="foxa1.L"/>
</dbReference>
<dbReference type="OMA" id="WSSYYTD"/>
<dbReference type="OrthoDB" id="5954824at2759"/>
<dbReference type="Proteomes" id="UP000186698">
    <property type="component" value="Unplaced"/>
</dbReference>
<dbReference type="Bgee" id="100125667">
    <property type="expression patterns" value="Expressed in stomach and 10 other cell types or tissues"/>
</dbReference>
<dbReference type="GO" id="GO:0005634">
    <property type="term" value="C:nucleus"/>
    <property type="evidence" value="ECO:0000303"/>
    <property type="project" value="UniProtKB"/>
</dbReference>
<dbReference type="GO" id="GO:0003677">
    <property type="term" value="F:DNA binding"/>
    <property type="evidence" value="ECO:0000303"/>
    <property type="project" value="UniProtKB"/>
</dbReference>
<dbReference type="GO" id="GO:0003700">
    <property type="term" value="F:DNA-binding transcription factor activity"/>
    <property type="evidence" value="ECO:0000303"/>
    <property type="project" value="UniProtKB"/>
</dbReference>
<dbReference type="GO" id="GO:0000981">
    <property type="term" value="F:DNA-binding transcription factor activity, RNA polymerase II-specific"/>
    <property type="evidence" value="ECO:0000318"/>
    <property type="project" value="GO_Central"/>
</dbReference>
<dbReference type="GO" id="GO:0019904">
    <property type="term" value="F:protein domain specific binding"/>
    <property type="evidence" value="ECO:0007669"/>
    <property type="project" value="InterPro"/>
</dbReference>
<dbReference type="GO" id="GO:0000978">
    <property type="term" value="F:RNA polymerase II cis-regulatory region sequence-specific DNA binding"/>
    <property type="evidence" value="ECO:0000318"/>
    <property type="project" value="GO_Central"/>
</dbReference>
<dbReference type="GO" id="GO:0009653">
    <property type="term" value="P:anatomical structure morphogenesis"/>
    <property type="evidence" value="ECO:0000318"/>
    <property type="project" value="GO_Central"/>
</dbReference>
<dbReference type="GO" id="GO:0030154">
    <property type="term" value="P:cell differentiation"/>
    <property type="evidence" value="ECO:0000318"/>
    <property type="project" value="GO_Central"/>
</dbReference>
<dbReference type="GO" id="GO:0006355">
    <property type="term" value="P:regulation of DNA-templated transcription"/>
    <property type="evidence" value="ECO:0000303"/>
    <property type="project" value="UniProtKB"/>
</dbReference>
<dbReference type="GO" id="GO:0006357">
    <property type="term" value="P:regulation of transcription by RNA polymerase II"/>
    <property type="evidence" value="ECO:0000318"/>
    <property type="project" value="GO_Central"/>
</dbReference>
<dbReference type="CDD" id="cd20038">
    <property type="entry name" value="FH_FOXA1"/>
    <property type="match status" value="1"/>
</dbReference>
<dbReference type="FunFam" id="1.10.10.10:FF:000042">
    <property type="entry name" value="hepatocyte nuclear factor 3-beta"/>
    <property type="match status" value="1"/>
</dbReference>
<dbReference type="Gene3D" id="1.10.10.10">
    <property type="entry name" value="Winged helix-like DNA-binding domain superfamily/Winged helix DNA-binding domain"/>
    <property type="match status" value="1"/>
</dbReference>
<dbReference type="InterPro" id="IPR013638">
    <property type="entry name" value="Fork-head_N"/>
</dbReference>
<dbReference type="InterPro" id="IPR001766">
    <property type="entry name" value="Fork_head_dom"/>
</dbReference>
<dbReference type="InterPro" id="IPR018533">
    <property type="entry name" value="Forkhead_box_C"/>
</dbReference>
<dbReference type="InterPro" id="IPR050211">
    <property type="entry name" value="FOX_domain-containing"/>
</dbReference>
<dbReference type="InterPro" id="IPR018122">
    <property type="entry name" value="TF_fork_head_CS_1"/>
</dbReference>
<dbReference type="InterPro" id="IPR030456">
    <property type="entry name" value="TF_fork_head_CS_2"/>
</dbReference>
<dbReference type="InterPro" id="IPR036388">
    <property type="entry name" value="WH-like_DNA-bd_sf"/>
</dbReference>
<dbReference type="InterPro" id="IPR036390">
    <property type="entry name" value="WH_DNA-bd_sf"/>
</dbReference>
<dbReference type="PANTHER" id="PTHR11829">
    <property type="entry name" value="FORKHEAD BOX PROTEIN"/>
    <property type="match status" value="1"/>
</dbReference>
<dbReference type="PANTHER" id="PTHR11829:SF195">
    <property type="entry name" value="HEPATOCYTE NUCLEAR FACTOR 3-ALPHA"/>
    <property type="match status" value="1"/>
</dbReference>
<dbReference type="Pfam" id="PF00250">
    <property type="entry name" value="Forkhead"/>
    <property type="match status" value="1"/>
</dbReference>
<dbReference type="Pfam" id="PF08430">
    <property type="entry name" value="Forkhead_N"/>
    <property type="match status" value="1"/>
</dbReference>
<dbReference type="Pfam" id="PF09354">
    <property type="entry name" value="HNF_C"/>
    <property type="match status" value="1"/>
</dbReference>
<dbReference type="PRINTS" id="PR00053">
    <property type="entry name" value="FORKHEAD"/>
</dbReference>
<dbReference type="SMART" id="SM00339">
    <property type="entry name" value="FH"/>
    <property type="match status" value="1"/>
</dbReference>
<dbReference type="SUPFAM" id="SSF46785">
    <property type="entry name" value="Winged helix' DNA-binding domain"/>
    <property type="match status" value="1"/>
</dbReference>
<dbReference type="PROSITE" id="PS00657">
    <property type="entry name" value="FORK_HEAD_1"/>
    <property type="match status" value="1"/>
</dbReference>
<dbReference type="PROSITE" id="PS00658">
    <property type="entry name" value="FORK_HEAD_2"/>
    <property type="match status" value="1"/>
</dbReference>
<dbReference type="PROSITE" id="PS50039">
    <property type="entry name" value="FORK_HEAD_3"/>
    <property type="match status" value="1"/>
</dbReference>
<proteinExistence type="evidence at transcript level"/>
<evidence type="ECO:0000255" key="1"/>
<evidence type="ECO:0000255" key="2">
    <source>
        <dbReference type="PROSITE-ProRule" id="PRU00089"/>
    </source>
</evidence>
<evidence type="ECO:0000256" key="3">
    <source>
        <dbReference type="SAM" id="MobiDB-lite"/>
    </source>
</evidence>
<evidence type="ECO:0000269" key="4">
    <source>
    </source>
</evidence>
<evidence type="ECO:0000269" key="5">
    <source>
    </source>
</evidence>
<evidence type="ECO:0000269" key="6">
    <source>
    </source>
</evidence>
<evidence type="ECO:0000305" key="7"/>
<evidence type="ECO:0000312" key="8">
    <source>
        <dbReference type="EMBL" id="AAA85028.1"/>
    </source>
</evidence>
<gene>
    <name type="primary">foxa1-a</name>
    <name type="synonym">hnf-3a</name>
</gene>
<accession>Q6LD29</accession>
<keyword id="KW-0238">DNA-binding</keyword>
<keyword id="KW-0539">Nucleus</keyword>
<keyword id="KW-1185">Reference proteome</keyword>
<keyword id="KW-0804">Transcription</keyword>
<keyword id="KW-0805">Transcription regulation</keyword>
<name>FXA1A_XENLA</name>
<sequence>MLGIVKMEGHETTDWSNYYQDTQEAYSSVPVSNMTQGLASMNTYMTMNPMSSSSNMTAAGSFNMSYGNSGLGAGLSPSGMSGMGAGAASAMNGMGSGVPSMGTALSPSNMNAMSAQQASMNSLSYSSMNPGMSPMAYGSSNMNRARDTKTFRRSYPHAKPPYSYISLITMAIQQAPSKMLTLSEIYQWIMDLFPYYRQNQQRWQNSIRHSLSFNDCFVKVARSPDKPGKGSYWTLHPDSGNMFENGCYLRRQKRFKCEKTQGGKGNQDGRKDHSGPSSPLQRVHGKSSQMDSSSSMSNPSSSPQALEHNGSNGEMKPQVAAGPSPLSSHQNHSTHSLAHESHIHLKGDPHYSFNHPFSINNLMSSSEQQHKLDFKAYEQALQQYSSYGGGLPGMPLGSPSMSGRGNIEPSALEPTYYQGVYSRPVLNTS</sequence>